<reference key="1">
    <citation type="journal article" date="2011" name="Science">
        <title>The Selaginella genome identifies genetic changes associated with the evolution of vascular plants.</title>
        <authorList>
            <person name="Banks J.A."/>
            <person name="Nishiyama T."/>
            <person name="Hasebe M."/>
            <person name="Bowman J.L."/>
            <person name="Gribskov M."/>
            <person name="dePamphilis C."/>
            <person name="Albert V.A."/>
            <person name="Aono N."/>
            <person name="Aoyama T."/>
            <person name="Ambrose B.A."/>
            <person name="Ashton N.W."/>
            <person name="Axtell M.J."/>
            <person name="Barker E."/>
            <person name="Barker M.S."/>
            <person name="Bennetzen J.L."/>
            <person name="Bonawitz N.D."/>
            <person name="Chapple C."/>
            <person name="Cheng C."/>
            <person name="Correa L.G."/>
            <person name="Dacre M."/>
            <person name="DeBarry J."/>
            <person name="Dreyer I."/>
            <person name="Elias M."/>
            <person name="Engstrom E.M."/>
            <person name="Estelle M."/>
            <person name="Feng L."/>
            <person name="Finet C."/>
            <person name="Floyd S.K."/>
            <person name="Frommer W.B."/>
            <person name="Fujita T."/>
            <person name="Gramzow L."/>
            <person name="Gutensohn M."/>
            <person name="Harholt J."/>
            <person name="Hattori M."/>
            <person name="Heyl A."/>
            <person name="Hirai T."/>
            <person name="Hiwatashi Y."/>
            <person name="Ishikawa M."/>
            <person name="Iwata M."/>
            <person name="Karol K.G."/>
            <person name="Koehler B."/>
            <person name="Kolukisaoglu U."/>
            <person name="Kubo M."/>
            <person name="Kurata T."/>
            <person name="Lalonde S."/>
            <person name="Li K."/>
            <person name="Li Y."/>
            <person name="Litt A."/>
            <person name="Lyons E."/>
            <person name="Manning G."/>
            <person name="Maruyama T."/>
            <person name="Michael T.P."/>
            <person name="Mikami K."/>
            <person name="Miyazaki S."/>
            <person name="Morinaga S."/>
            <person name="Murata T."/>
            <person name="Mueller-Roeber B."/>
            <person name="Nelson D.R."/>
            <person name="Obara M."/>
            <person name="Oguri Y."/>
            <person name="Olmstead R.G."/>
            <person name="Onodera N."/>
            <person name="Petersen B.L."/>
            <person name="Pils B."/>
            <person name="Prigge M."/>
            <person name="Rensing S.A."/>
            <person name="Riano-Pachon D.M."/>
            <person name="Roberts A.W."/>
            <person name="Sato Y."/>
            <person name="Scheller H.V."/>
            <person name="Schulz B."/>
            <person name="Schulz C."/>
            <person name="Shakirov E.V."/>
            <person name="Shibagaki N."/>
            <person name="Shinohara N."/>
            <person name="Shippen D.E."/>
            <person name="Soerensen I."/>
            <person name="Sotooka R."/>
            <person name="Sugimoto N."/>
            <person name="Sugita M."/>
            <person name="Sumikawa N."/>
            <person name="Tanurdzic M."/>
            <person name="Theissen G."/>
            <person name="Ulvskov P."/>
            <person name="Wakazuki S."/>
            <person name="Weng J.K."/>
            <person name="Willats W.W."/>
            <person name="Wipf D."/>
            <person name="Wolf P.G."/>
            <person name="Yang L."/>
            <person name="Zimmer A.D."/>
            <person name="Zhu Q."/>
            <person name="Mitros T."/>
            <person name="Hellsten U."/>
            <person name="Loque D."/>
            <person name="Otillar R."/>
            <person name="Salamov A."/>
            <person name="Schmutz J."/>
            <person name="Shapiro H."/>
            <person name="Lindquist E."/>
            <person name="Lucas S."/>
            <person name="Rokhsar D."/>
            <person name="Grigoriev I.V."/>
        </authorList>
    </citation>
    <scope>NUCLEOTIDE SEQUENCE [LARGE SCALE GENOMIC DNA]</scope>
</reference>
<reference key="2">
    <citation type="submission" date="2008-03" db="EMBL/GenBank/DDBJ databases">
        <title>DOE Joint Genome Institute Selaginella moellendorffii EST project.</title>
        <authorList>
            <person name="Richardson P."/>
            <person name="Lucas S."/>
            <person name="Rokhsar D."/>
            <person name="Wang M."/>
            <person name="Lindquist E.A."/>
        </authorList>
    </citation>
    <scope>NUCLEOTIDE SEQUENCE [LARGE SCALE MRNA]</scope>
</reference>
<gene>
    <name type="ORF">SELMODRAFT_448915</name>
</gene>
<comment type="subcellular location">
    <subcellularLocation>
        <location evidence="1">Membrane</location>
        <topology evidence="1">Single-pass membrane protein</topology>
    </subcellularLocation>
</comment>
<comment type="sequence caution" evidence="5">
    <conflict type="erroneous gene model prediction">
        <sequence resource="EMBL-CDS" id="EFJ06098"/>
    </conflict>
    <text>The predicted gene has been split into 2 genes.</text>
</comment>
<proteinExistence type="evidence at transcript level"/>
<protein>
    <recommendedName>
        <fullName>FAS1 domain-containing protein SELMODRAFT_448915</fullName>
    </recommendedName>
</protein>
<evidence type="ECO:0000250" key="1"/>
<evidence type="ECO:0000255" key="2"/>
<evidence type="ECO:0000255" key="3">
    <source>
        <dbReference type="PROSITE-ProRule" id="PRU00082"/>
    </source>
</evidence>
<evidence type="ECO:0000256" key="4">
    <source>
        <dbReference type="SAM" id="MobiDB-lite"/>
    </source>
</evidence>
<evidence type="ECO:0000305" key="5"/>
<dbReference type="EMBL" id="GL377707">
    <property type="protein sequence ID" value="EFJ06098.1"/>
    <property type="status" value="ALT_SEQ"/>
    <property type="molecule type" value="Genomic_DNA"/>
</dbReference>
<dbReference type="EMBL" id="FE482939">
    <property type="status" value="NOT_ANNOTATED_CDS"/>
    <property type="molecule type" value="mRNA"/>
</dbReference>
<dbReference type="RefSeq" id="XP_002992808.1">
    <property type="nucleotide sequence ID" value="XM_002992762.1"/>
</dbReference>
<dbReference type="SMR" id="P0DH64"/>
<dbReference type="STRING" id="88036.P0DH64"/>
<dbReference type="KEGG" id="smo:SELMODRAFT_448915"/>
<dbReference type="eggNOG" id="ENOG502QQH2">
    <property type="taxonomic scope" value="Eukaryota"/>
</dbReference>
<dbReference type="HOGENOM" id="CLU_555981_0_0_1"/>
<dbReference type="InParanoid" id="P0DH64"/>
<dbReference type="Proteomes" id="UP000001514">
    <property type="component" value="Unassembled WGS sequence"/>
</dbReference>
<dbReference type="GO" id="GO:0005886">
    <property type="term" value="C:plasma membrane"/>
    <property type="evidence" value="ECO:0000318"/>
    <property type="project" value="GO_Central"/>
</dbReference>
<dbReference type="Gene3D" id="2.30.180.10">
    <property type="entry name" value="FAS1 domain"/>
    <property type="match status" value="1"/>
</dbReference>
<dbReference type="InterPro" id="IPR036378">
    <property type="entry name" value="FAS1_dom_sf"/>
</dbReference>
<dbReference type="InterPro" id="IPR000782">
    <property type="entry name" value="FAS1_domain"/>
</dbReference>
<dbReference type="InterPro" id="IPR053339">
    <property type="entry name" value="FAS1_domain_protein"/>
</dbReference>
<dbReference type="PANTHER" id="PTHR36069:SF1">
    <property type="entry name" value="EXPRESSED PROTEIN"/>
    <property type="match status" value="1"/>
</dbReference>
<dbReference type="PANTHER" id="PTHR36069">
    <property type="entry name" value="EXPRESSED PROTEIN-RELATED"/>
    <property type="match status" value="1"/>
</dbReference>
<dbReference type="Pfam" id="PF02469">
    <property type="entry name" value="Fasciclin"/>
    <property type="match status" value="1"/>
</dbReference>
<dbReference type="SMART" id="SM00554">
    <property type="entry name" value="FAS1"/>
    <property type="match status" value="1"/>
</dbReference>
<dbReference type="SUPFAM" id="SSF82153">
    <property type="entry name" value="FAS1 domain"/>
    <property type="match status" value="1"/>
</dbReference>
<dbReference type="PROSITE" id="PS50213">
    <property type="entry name" value="FAS1"/>
    <property type="match status" value="1"/>
</dbReference>
<sequence>MRRTGRSYKPLLSQLKDHHIPVHPSSRAERAMESRTLLVLLFVGVVTIVSSGLERAAAQDDTDDGILPSSDVQPLVSNMIGQGFTVAAAVAQSLQTLIPIRSTLLIPSNNAIAGVDANLSQEDIINTLQYHVLTFPTSFEALSRNDVGAELPTMLQGEMITVTSNSPGNFTLNEVNITHPDVCSSTRFIACHGIDRVLAYNSSLVTAAGPEASPPFGAEQASPAPEALPPGTRSPNNTANPSNRKSNSTRSSASRYPVSE</sequence>
<feature type="chain" id="PRO_0000412060" description="FAS1 domain-containing protein SELMODRAFT_448915">
    <location>
        <begin position="1"/>
        <end position="260"/>
    </location>
</feature>
<feature type="topological domain" description="Cytoplasmic" evidence="2">
    <location>
        <begin position="1"/>
        <end position="35"/>
    </location>
</feature>
<feature type="transmembrane region" description="Helical" evidence="2">
    <location>
        <begin position="36"/>
        <end position="58"/>
    </location>
</feature>
<feature type="topological domain" description="Extracellular" evidence="2">
    <location>
        <begin position="59"/>
        <end position="260"/>
    </location>
</feature>
<feature type="domain" description="FAS1" evidence="3">
    <location>
        <begin position="59"/>
        <end position="198"/>
    </location>
</feature>
<feature type="region of interest" description="Disordered" evidence="4">
    <location>
        <begin position="210"/>
        <end position="260"/>
    </location>
</feature>
<feature type="compositionally biased region" description="Polar residues" evidence="4">
    <location>
        <begin position="233"/>
        <end position="254"/>
    </location>
</feature>
<feature type="glycosylation site" description="N-linked (GlcNAc...) asparagine" evidence="2">
    <location>
        <position position="118"/>
    </location>
</feature>
<feature type="glycosylation site" description="N-linked (GlcNAc...) asparagine" evidence="2">
    <location>
        <position position="169"/>
    </location>
</feature>
<feature type="glycosylation site" description="N-linked (GlcNAc...) asparagine" evidence="2">
    <location>
        <position position="176"/>
    </location>
</feature>
<feature type="glycosylation site" description="N-linked (GlcNAc...) asparagine" evidence="2">
    <location>
        <position position="201"/>
    </location>
</feature>
<feature type="glycosylation site" description="N-linked (GlcNAc...) asparagine" evidence="2">
    <location>
        <position position="236"/>
    </location>
</feature>
<feature type="glycosylation site" description="N-linked (GlcNAc...) asparagine" evidence="2">
    <location>
        <position position="247"/>
    </location>
</feature>
<feature type="sequence conflict" description="In Ref. 2; FE482939." evidence="5" ref="2">
    <original>A</original>
    <variation>V</variation>
    <location>
        <position position="28"/>
    </location>
</feature>
<feature type="sequence conflict" description="In Ref. 2; FE482939." evidence="5" ref="2">
    <original>R</original>
    <variation>Q</variation>
    <location>
        <position position="233"/>
    </location>
</feature>
<organism>
    <name type="scientific">Selaginella moellendorffii</name>
    <name type="common">Spikemoss</name>
    <dbReference type="NCBI Taxonomy" id="88036"/>
    <lineage>
        <taxon>Eukaryota</taxon>
        <taxon>Viridiplantae</taxon>
        <taxon>Streptophyta</taxon>
        <taxon>Embryophyta</taxon>
        <taxon>Tracheophyta</taxon>
        <taxon>Lycopodiopsida</taxon>
        <taxon>Selaginellales</taxon>
        <taxon>Selaginellaceae</taxon>
        <taxon>Selaginella</taxon>
    </lineage>
</organism>
<keyword id="KW-0325">Glycoprotein</keyword>
<keyword id="KW-0472">Membrane</keyword>
<keyword id="KW-1185">Reference proteome</keyword>
<keyword id="KW-0812">Transmembrane</keyword>
<keyword id="KW-1133">Transmembrane helix</keyword>
<accession>P0DH64</accession>
<accession>D8TB55</accession>
<name>Y4891_SELML</name>